<reference key="1">
    <citation type="journal article" date="1990" name="Mol. Cell. Biol.">
        <title>The c-myc-regulated gene mr1 encodes plasminogen activator inhibitor 1.</title>
        <authorList>
            <person name="Prendergast G.C."/>
            <person name="Diamond L.E."/>
            <person name="Dahl D."/>
            <person name="Cole M.D."/>
        </authorList>
    </citation>
    <scope>NUCLEOTIDE SEQUENCE [MRNA]</scope>
</reference>
<reference key="2">
    <citation type="journal article" date="1994" name="Eur. J. Biochem.">
        <title>Characterization of the murine plasma fibrinolytic system.</title>
        <authorList>
            <person name="Lijnen H.R."/>
            <person name="van Hoef B."/>
            <person name="Beelen V."/>
            <person name="Collen D."/>
        </authorList>
    </citation>
    <scope>PROTEIN SEQUENCE OF 23-29</scope>
</reference>
<reference key="3">
    <citation type="journal article" date="2006" name="Nat. Cell Biol.">
        <title>Plasminogen activator inhibitor-1 is a critical downstream target of p53 in the induction of replicative senescence.</title>
        <authorList>
            <person name="Kortlever R.M."/>
            <person name="Higgins P.J."/>
            <person name="Bernards R."/>
        </authorList>
    </citation>
    <scope>FUNCTION</scope>
</reference>
<reference key="4">
    <citation type="journal article" date="2013" name="Biochem. Biophys. Res. Commun.">
        <title>The molecular clock regulates circadian transcription of tissue factor gene.</title>
        <authorList>
            <person name="Oishi K."/>
            <person name="Koyanagi S."/>
            <person name="Ohkura N."/>
        </authorList>
    </citation>
    <scope>INDUCTION</scope>
</reference>
<reference key="5">
    <citation type="journal article" date="2017" name="Aging Cell">
        <title>Serpine 1 induces alveolar type II cell senescence through activating p53-p21-Rb pathway in fibrotic lung disease.</title>
        <authorList>
            <person name="Jiang C."/>
            <person name="Liu G."/>
            <person name="Luckhardt T."/>
            <person name="Antony V."/>
            <person name="Zhou Y."/>
            <person name="Carter A.B."/>
            <person name="Thannickal V.J."/>
            <person name="Liu R.M."/>
        </authorList>
    </citation>
    <scope>FUNCTION</scope>
</reference>
<organism>
    <name type="scientific">Mus musculus</name>
    <name type="common">Mouse</name>
    <dbReference type="NCBI Taxonomy" id="10090"/>
    <lineage>
        <taxon>Eukaryota</taxon>
        <taxon>Metazoa</taxon>
        <taxon>Chordata</taxon>
        <taxon>Craniata</taxon>
        <taxon>Vertebrata</taxon>
        <taxon>Euteleostomi</taxon>
        <taxon>Mammalia</taxon>
        <taxon>Eutheria</taxon>
        <taxon>Euarchontoglires</taxon>
        <taxon>Glires</taxon>
        <taxon>Rodentia</taxon>
        <taxon>Myomorpha</taxon>
        <taxon>Muroidea</taxon>
        <taxon>Muridae</taxon>
        <taxon>Murinae</taxon>
        <taxon>Mus</taxon>
        <taxon>Mus</taxon>
    </lineage>
</organism>
<sequence>MQMSSALACLILGLVLVSGKGFTLPLRESHTAHQATDFGVKVFQQVVQASKDRNVVFSPYGVSSVLAMLQMTTAGKTRRQIQDAMGFKVNEKGTAHALRQLSKELMGPWNKNEISTADAIFVQRDLELVQGFMPHFFKLFQTMVKQVDFSEVERARFIINDWVERHTKGMINDLLAKGAVDELTRLVLVNALYFSGQWKTPFLEASTHQRLFHKSDGSTVSVPMMAQSNKFNYTEFTTPDGLEYDVVELPYQRDTLSMFIAAPFEKDVHLSALTNILDAELIRQWKGNMTRLPRLLILPKFSLETEVDLRGPLEKLGMPDMFSATLADFTSLSDQEQLSVAQALQKVRIEVNESGTVASSSTAFVISARMAPTEMVIDRSFLFVVRHNPTETILFMGQVMEP</sequence>
<name>PAI1_MOUSE</name>
<gene>
    <name type="primary">Serpine1</name>
    <name type="synonym">Mr1</name>
    <name type="synonym">Pai1</name>
    <name type="synonym">Planh1</name>
</gene>
<feature type="signal peptide" evidence="7">
    <location>
        <begin position="1"/>
        <end position="22"/>
    </location>
</feature>
<feature type="chain" id="PRO_0000032500" description="Plasminogen activator inhibitor 1">
    <location>
        <begin position="23"/>
        <end position="402"/>
    </location>
</feature>
<feature type="site" description="Reactive bond">
    <location>
        <begin position="369"/>
        <end position="370"/>
    </location>
</feature>
<feature type="glycosylation site" description="N-linked (GlcNAc...) asparagine" evidence="2">
    <location>
        <position position="232"/>
    </location>
</feature>
<feature type="glycosylation site" description="N-linked (GlcNAc...) asparagine" evidence="2">
    <location>
        <position position="288"/>
    </location>
</feature>
<feature type="glycosylation site" description="N-linked (GlcNAc...) asparagine" evidence="2">
    <location>
        <position position="352"/>
    </location>
</feature>
<feature type="sequence conflict" description="In Ref. 2; AA sequence." evidence="6" ref="2">
    <original>T</original>
    <variation>M</variation>
    <location>
        <position position="23"/>
    </location>
</feature>
<feature type="helix" evidence="8">
    <location>
        <begin position="31"/>
        <end position="50"/>
    </location>
</feature>
<feature type="strand" evidence="8">
    <location>
        <begin position="55"/>
        <end position="57"/>
    </location>
</feature>
<feature type="helix" evidence="8">
    <location>
        <begin position="59"/>
        <end position="72"/>
    </location>
</feature>
<feature type="helix" evidence="8">
    <location>
        <begin position="75"/>
        <end position="85"/>
    </location>
</feature>
<feature type="helix" evidence="8">
    <location>
        <begin position="94"/>
        <end position="106"/>
    </location>
</feature>
<feature type="helix" evidence="8">
    <location>
        <begin position="108"/>
        <end position="110"/>
    </location>
</feature>
<feature type="strand" evidence="8">
    <location>
        <begin position="111"/>
        <end position="123"/>
    </location>
</feature>
<feature type="helix" evidence="8">
    <location>
        <begin position="132"/>
        <end position="140"/>
    </location>
</feature>
<feature type="strand" evidence="8">
    <location>
        <begin position="145"/>
        <end position="147"/>
    </location>
</feature>
<feature type="helix" evidence="8">
    <location>
        <begin position="152"/>
        <end position="166"/>
    </location>
</feature>
<feature type="turn" evidence="8">
    <location>
        <begin position="167"/>
        <end position="169"/>
    </location>
</feature>
<feature type="strand" evidence="8">
    <location>
        <begin position="186"/>
        <end position="200"/>
    </location>
</feature>
<feature type="helix" evidence="8">
    <location>
        <begin position="204"/>
        <end position="206"/>
    </location>
</feature>
<feature type="strand" evidence="8">
    <location>
        <begin position="208"/>
        <end position="210"/>
    </location>
</feature>
<feature type="strand" evidence="8">
    <location>
        <begin position="222"/>
        <end position="237"/>
    </location>
</feature>
<feature type="strand" evidence="8">
    <location>
        <begin position="243"/>
        <end position="265"/>
    </location>
</feature>
<feature type="helix" evidence="8">
    <location>
        <begin position="271"/>
        <end position="274"/>
    </location>
</feature>
<feature type="helix" evidence="8">
    <location>
        <begin position="279"/>
        <end position="288"/>
    </location>
</feature>
<feature type="strand" evidence="8">
    <location>
        <begin position="290"/>
        <end position="299"/>
    </location>
</feature>
<feature type="strand" evidence="8">
    <location>
        <begin position="301"/>
        <end position="308"/>
    </location>
</feature>
<feature type="helix" evidence="8">
    <location>
        <begin position="310"/>
        <end position="315"/>
    </location>
</feature>
<feature type="helix" evidence="8">
    <location>
        <begin position="320"/>
        <end position="322"/>
    </location>
</feature>
<feature type="turn" evidence="8">
    <location>
        <begin position="324"/>
        <end position="326"/>
    </location>
</feature>
<feature type="turn" evidence="8">
    <location>
        <begin position="330"/>
        <end position="332"/>
    </location>
</feature>
<feature type="strand" evidence="8">
    <location>
        <begin position="334"/>
        <end position="336"/>
    </location>
</feature>
<feature type="strand" evidence="8">
    <location>
        <begin position="344"/>
        <end position="351"/>
    </location>
</feature>
<feature type="strand" evidence="8">
    <location>
        <begin position="353"/>
        <end position="365"/>
    </location>
</feature>
<feature type="strand" evidence="8">
    <location>
        <begin position="381"/>
        <end position="387"/>
    </location>
</feature>
<feature type="turn" evidence="8">
    <location>
        <begin position="388"/>
        <end position="391"/>
    </location>
</feature>
<feature type="strand" evidence="8">
    <location>
        <begin position="392"/>
        <end position="399"/>
    </location>
</feature>
<protein>
    <recommendedName>
        <fullName>Plasminogen activator inhibitor 1</fullName>
        <shortName>PAI</shortName>
        <shortName>PAI-1</shortName>
    </recommendedName>
    <alternativeName>
        <fullName>Endothelial plasminogen activator inhibitor</fullName>
    </alternativeName>
    <alternativeName>
        <fullName>Serpin E1</fullName>
    </alternativeName>
</protein>
<proteinExistence type="evidence at protein level"/>
<dbReference type="EMBL" id="M33960">
    <property type="protein sequence ID" value="AAA39887.1"/>
    <property type="molecule type" value="mRNA"/>
</dbReference>
<dbReference type="CCDS" id="CCDS19761.1"/>
<dbReference type="PIR" id="A34761">
    <property type="entry name" value="A34761"/>
</dbReference>
<dbReference type="PDB" id="3LW2">
    <property type="method" value="X-ray"/>
    <property type="resolution" value="1.93 A"/>
    <property type="chains" value="A=24-402"/>
</dbReference>
<dbReference type="PDBsum" id="3LW2"/>
<dbReference type="SMR" id="P22777"/>
<dbReference type="ComplexPortal" id="CPX-492">
    <property type="entry name" value="Vitronectin-PAI-1 complex"/>
</dbReference>
<dbReference type="ComplexPortal" id="CPX-495">
    <property type="entry name" value="uPA-PAI-1 complex"/>
</dbReference>
<dbReference type="ComplexPortal" id="CPX-518">
    <property type="entry name" value="tPA-PAI-1 complex"/>
</dbReference>
<dbReference type="CORUM" id="P22777"/>
<dbReference type="FunCoup" id="P22777">
    <property type="interactions" value="116"/>
</dbReference>
<dbReference type="IntAct" id="P22777">
    <property type="interactions" value="1"/>
</dbReference>
<dbReference type="STRING" id="10090.ENSMUSP00000039586"/>
<dbReference type="MEROPS" id="I04.020"/>
<dbReference type="GlyCosmos" id="P22777">
    <property type="glycosylation" value="3 sites, No reported glycans"/>
</dbReference>
<dbReference type="GlyGen" id="P22777">
    <property type="glycosylation" value="5 sites, 1 O-linked glycan (2 sites)"/>
</dbReference>
<dbReference type="iPTMnet" id="P22777"/>
<dbReference type="PhosphoSitePlus" id="P22777"/>
<dbReference type="CPTAC" id="non-CPTAC-4049"/>
<dbReference type="jPOST" id="P22777"/>
<dbReference type="PaxDb" id="10090-ENSMUSP00000039586"/>
<dbReference type="PeptideAtlas" id="P22777"/>
<dbReference type="ProteomicsDB" id="287939"/>
<dbReference type="Pumba" id="P22777"/>
<dbReference type="ABCD" id="P22777">
    <property type="antibodies" value="1 sequenced antibody"/>
</dbReference>
<dbReference type="AGR" id="MGI:97608"/>
<dbReference type="MGI" id="MGI:97608">
    <property type="gene designation" value="Serpine1"/>
</dbReference>
<dbReference type="eggNOG" id="KOG2392">
    <property type="taxonomic scope" value="Eukaryota"/>
</dbReference>
<dbReference type="InParanoid" id="P22777"/>
<dbReference type="PhylomeDB" id="P22777"/>
<dbReference type="Reactome" id="R-MMU-114608">
    <property type="pathway name" value="Platelet degranulation"/>
</dbReference>
<dbReference type="Reactome" id="R-MMU-3000178">
    <property type="pathway name" value="ECM proteoglycans"/>
</dbReference>
<dbReference type="Reactome" id="R-MMU-75205">
    <property type="pathway name" value="Dissolution of Fibrin Clot"/>
</dbReference>
<dbReference type="ChiTaRS" id="Serpine1">
    <property type="organism name" value="mouse"/>
</dbReference>
<dbReference type="EvolutionaryTrace" id="P22777"/>
<dbReference type="PRO" id="PR:P22777"/>
<dbReference type="Proteomes" id="UP000000589">
    <property type="component" value="Unplaced"/>
</dbReference>
<dbReference type="RNAct" id="P22777">
    <property type="molecule type" value="protein"/>
</dbReference>
<dbReference type="GO" id="GO:0005615">
    <property type="term" value="C:extracellular space"/>
    <property type="evidence" value="ECO:0007005"/>
    <property type="project" value="BHF-UCL"/>
</dbReference>
<dbReference type="GO" id="GO:1904090">
    <property type="term" value="C:peptidase inhibitor complex"/>
    <property type="evidence" value="ECO:0000266"/>
    <property type="project" value="ComplexPortal"/>
</dbReference>
<dbReference type="GO" id="GO:0097180">
    <property type="term" value="C:serine protease inhibitor complex"/>
    <property type="evidence" value="ECO:0000266"/>
    <property type="project" value="ComplexPortal"/>
</dbReference>
<dbReference type="GO" id="GO:0004867">
    <property type="term" value="F:serine-type endopeptidase inhibitor activity"/>
    <property type="evidence" value="ECO:0000314"/>
    <property type="project" value="MGI"/>
</dbReference>
<dbReference type="GO" id="GO:0001525">
    <property type="term" value="P:angiogenesis"/>
    <property type="evidence" value="ECO:0000315"/>
    <property type="project" value="MGI"/>
</dbReference>
<dbReference type="GO" id="GO:0071560">
    <property type="term" value="P:cellular response to transforming growth factor beta stimulus"/>
    <property type="evidence" value="ECO:0000314"/>
    <property type="project" value="MGI"/>
</dbReference>
<dbReference type="GO" id="GO:0050829">
    <property type="term" value="P:defense response to Gram-negative bacterium"/>
    <property type="evidence" value="ECO:0000315"/>
    <property type="project" value="BHF-UCL"/>
</dbReference>
<dbReference type="GO" id="GO:0051918">
    <property type="term" value="P:negative regulation of fibrinolysis"/>
    <property type="evidence" value="ECO:0000303"/>
    <property type="project" value="ComplexPortal"/>
</dbReference>
<dbReference type="GO" id="GO:0010757">
    <property type="term" value="P:negative regulation of plasminogen activation"/>
    <property type="evidence" value="ECO:0000315"/>
    <property type="project" value="BHF-UCL"/>
</dbReference>
<dbReference type="GO" id="GO:0061044">
    <property type="term" value="P:negative regulation of vascular wound healing"/>
    <property type="evidence" value="ECO:0000315"/>
    <property type="project" value="BHF-UCL"/>
</dbReference>
<dbReference type="GO" id="GO:0001890">
    <property type="term" value="P:placenta development"/>
    <property type="evidence" value="ECO:0000315"/>
    <property type="project" value="MGI"/>
</dbReference>
<dbReference type="GO" id="GO:0045766">
    <property type="term" value="P:positive regulation of angiogenesis"/>
    <property type="evidence" value="ECO:0000315"/>
    <property type="project" value="BHF-UCL"/>
</dbReference>
<dbReference type="GO" id="GO:0045765">
    <property type="term" value="P:regulation of angiogenesis"/>
    <property type="evidence" value="ECO:0000314"/>
    <property type="project" value="MGI"/>
</dbReference>
<dbReference type="GO" id="GO:0042127">
    <property type="term" value="P:regulation of cell population proliferation"/>
    <property type="evidence" value="ECO:0000316"/>
    <property type="project" value="MGI"/>
</dbReference>
<dbReference type="FunFam" id="2.30.39.10:FF:000006">
    <property type="entry name" value="Plasminogen activator inhibitor 1"/>
    <property type="match status" value="1"/>
</dbReference>
<dbReference type="FunFam" id="3.30.497.10:FF:000006">
    <property type="entry name" value="Plasminogen activator inhibitor 1"/>
    <property type="match status" value="1"/>
</dbReference>
<dbReference type="Gene3D" id="2.30.39.10">
    <property type="entry name" value="Alpha-1-antitrypsin, domain 1"/>
    <property type="match status" value="1"/>
</dbReference>
<dbReference type="Gene3D" id="3.30.497.10">
    <property type="entry name" value="Antithrombin, subunit I, domain 2"/>
    <property type="match status" value="1"/>
</dbReference>
<dbReference type="InterPro" id="IPR023795">
    <property type="entry name" value="Serpin_CS"/>
</dbReference>
<dbReference type="InterPro" id="IPR023796">
    <property type="entry name" value="Serpin_dom"/>
</dbReference>
<dbReference type="InterPro" id="IPR000215">
    <property type="entry name" value="Serpin_fam"/>
</dbReference>
<dbReference type="InterPro" id="IPR036186">
    <property type="entry name" value="Serpin_sf"/>
</dbReference>
<dbReference type="InterPro" id="IPR042178">
    <property type="entry name" value="Serpin_sf_1"/>
</dbReference>
<dbReference type="InterPro" id="IPR042185">
    <property type="entry name" value="Serpin_sf_2"/>
</dbReference>
<dbReference type="PANTHER" id="PTHR11461:SF49">
    <property type="entry name" value="PLASMINOGEN ACTIVATOR INHIBITOR 1"/>
    <property type="match status" value="1"/>
</dbReference>
<dbReference type="PANTHER" id="PTHR11461">
    <property type="entry name" value="SERINE PROTEASE INHIBITOR, SERPIN"/>
    <property type="match status" value="1"/>
</dbReference>
<dbReference type="Pfam" id="PF00079">
    <property type="entry name" value="Serpin"/>
    <property type="match status" value="1"/>
</dbReference>
<dbReference type="SMART" id="SM00093">
    <property type="entry name" value="SERPIN"/>
    <property type="match status" value="1"/>
</dbReference>
<dbReference type="SUPFAM" id="SSF56574">
    <property type="entry name" value="Serpins"/>
    <property type="match status" value="1"/>
</dbReference>
<dbReference type="PROSITE" id="PS00284">
    <property type="entry name" value="SERPIN"/>
    <property type="match status" value="1"/>
</dbReference>
<evidence type="ECO:0000250" key="1">
    <source>
        <dbReference type="UniProtKB" id="P05121"/>
    </source>
</evidence>
<evidence type="ECO:0000255" key="2"/>
<evidence type="ECO:0000269" key="3">
    <source>
    </source>
</evidence>
<evidence type="ECO:0000269" key="4">
    <source>
    </source>
</evidence>
<evidence type="ECO:0000269" key="5">
    <source>
    </source>
</evidence>
<evidence type="ECO:0000305" key="6"/>
<evidence type="ECO:0000305" key="7">
    <source>
    </source>
</evidence>
<evidence type="ECO:0007829" key="8">
    <source>
        <dbReference type="PDB" id="3LW2"/>
    </source>
</evidence>
<accession>P22777</accession>
<keyword id="KW-0002">3D-structure</keyword>
<keyword id="KW-0903">Direct protein sequencing</keyword>
<keyword id="KW-0325">Glycoprotein</keyword>
<keyword id="KW-0646">Protease inhibitor</keyword>
<keyword id="KW-1185">Reference proteome</keyword>
<keyword id="KW-0964">Secreted</keyword>
<keyword id="KW-0722">Serine protease inhibitor</keyword>
<keyword id="KW-0732">Signal</keyword>
<comment type="function">
    <text evidence="1 3 5">Serine protease inhibitor. Inhibits TMPRSS7. Is a primary inhibitor of tissue-type plasminogen activator (PLAT) and urokinase-type plasminogen activator (PLAU). As PLAT inhibitor, it is required for fibrinolysis down-regulation and is responsible for the controlled degradation of blood clots. As PLAU inhibitor, it is involved in the regulation of cell adhesion and spreading. Acts as a regulator of cell migration, independently of its role as protease inhibitor. It is required for stimulation of keratinocyte migration during cutaneous injury repair (By similarity). Involved in cellular and replicative senescence (PubMed:16862142). Plays a role in alveolar type 2 cells senescence in the lung (PubMed:28722352). Is involved in the regulation of cementogenic differentiation of periodontal ligament stem cells, and regulates odontoblast differentiation and dentin formation during odontogenesis (By similarity).</text>
</comment>
<comment type="subunit">
    <text evidence="1">Forms a heterodimer with TMPRSS7. Interacts with VTN. Binds LRP1B; binding is followed by internalization and degradation. Interacts with PPP1CB. In complex with PLAU/uPA, interacts with PLAUR/uPAR (By similarity). Interacts with SORL1 and LRP1, either alone or in complex with PLAU; these interactions are abolished in the presence of LRPAP1/RAP (By similarity). The ternary complex composed of PLAUR-PLAU-PAI1 also interacts with SORL1 (By similarity). Interacts with PLAT/tPA (By similarity). Also interacts with SORL1, when complexed to PLAT/tPA (By similarity).</text>
</comment>
<comment type="interaction">
    <interactant intactId="EBI-490898">
        <id>P22777</id>
    </interactant>
    <interactant intactId="EBI-490889">
        <id>Q5S248</id>
        <label>Tmprss11e</label>
    </interactant>
    <organismsDiffer>false</organismsDiffer>
    <experiments>2</experiments>
</comment>
<comment type="subcellular location">
    <subcellularLocation>
        <location evidence="1">Secreted</location>
    </subcellularLocation>
</comment>
<comment type="induction">
    <text evidence="4">Expression in the liver oscillates in a circadian manner.</text>
</comment>
<comment type="similarity">
    <text evidence="6">Belongs to the serpin family.</text>
</comment>